<proteinExistence type="evidence at transcript level"/>
<name>PLET2_ARATH</name>
<accession>Q5YGP7</accession>
<accession>Q6PQQ7</accession>
<accession>Q9SYC2</accession>
<comment type="function">
    <text evidence="1 4 5 7 8">Probably acts as a transcriptional activator. Binds to the GCC-box pathogenesis-related promoter element. May be involved in the regulation of gene expression by stress factors and by components of stress signal transduction pathways (By similarity). Master regulator of basal/root fate. Essential for root quiescent center (QC) and columella specification, stem cell activity, as well as for establishment of the stem cell niche during embryogenesis. Modulates the root polar auxin transport by regulating the distribution of PIN genes. Essential role in respecifying pattern and polarity in damaged roots. Direct target of the transcriptional corepressor TPL. Expression levels and patterns regulated post-transcriptionally by root meristem growth factors (RGFs).</text>
</comment>
<comment type="subcellular location">
    <subcellularLocation>
        <location evidence="2 4">Nucleus</location>
    </subcellularLocation>
</comment>
<comment type="tissue specificity">
    <text evidence="4 5 6 7 8">Expressed in roots, seedlings, flowers, and siliques. Also detected at low levels in leaves. In roots, specifically detected in the distal root meristem, including the QC. This tissue specificity is regulated by auxin gradient and depends on PIN proteins.</text>
</comment>
<comment type="developmental stage">
    <text evidence="4 8">Accumulates in the basal embryo region that gives rise to hypocotyl, root, and root stem cells. Expressed in the root meristem throughout embryo development.</text>
</comment>
<comment type="induction">
    <text evidence="4">By auxin accumulation.</text>
</comment>
<comment type="PTM">
    <text evidence="9">Stabilized in root meristems by reactive oxygen species (ROS) mediated oxidative post-translational modification triggered by RGF1 hormone peptide in a RITF1-dependent manner.</text>
</comment>
<comment type="similarity">
    <text evidence="12">Belongs to the AP2/ERF transcription factor family. AP2 subfamily.</text>
</comment>
<comment type="sequence caution" evidence="12">
    <conflict type="erroneous gene model prediction">
        <sequence resource="EMBL-CDS" id="AAD30633"/>
    </conflict>
</comment>
<sequence length="568" mass="62233">MNSNNWLAFPLSPTHSSLPPHIHSSQNSHFNLGLVNDNIDNPFQNQGWNMINPHGGGGEGGEVPKVADFLGVSKSGDHHTDHNLVPYNDIHQTNASDYYFQTNSLLPTVVTCASNAPNNYELQESAHNLQSLTLSMGSTGAAAAEVATVKASPAETSADNSSSTTNTSGGAIVEATPRRTLETFGQRTSIYRGVTRHRWTGRYEAHLWDNSCRREGQSRKGRQVYLGGYDKEEKAARAYDLAALKYWGPSTTTNFPITNYEKEVEEMKNMTRQEFVASIRRKSSGFSRGASMYRGVTRHHQHGRWQARIGRVAGNKDLYLGTFSTEEEAAEAYDIAAIKFRGLNAVTNFEINRYDVKAILESNTLPIGGGAAKRLKEAQALESSRKREEMIALGSNFHQYGAASGSSSVASSSRLQLQPYPLSIQQPFEHLHHHQPLLTLQNNNDISQYHDSFSYIQTQLHLHQQQTNNYLQSSSHTSQLYNAYLQSNPGLLHGFVSDNNNTSGFLGNNGIGIGSSSTVGSSAEEEFPAVKVDYDMPPSGGATGYGGWNSGESAQGSNPGGVFTMWNE</sequence>
<protein>
    <recommendedName>
        <fullName evidence="10">AP2-like ethylene-responsive transcription factor PLT2</fullName>
    </recommendedName>
    <alternativeName>
        <fullName evidence="11">Protein AINTEGUMENTA-LIKE 4</fullName>
    </alternativeName>
    <alternativeName>
        <fullName evidence="10">Protein PLETHORA 2</fullName>
    </alternativeName>
</protein>
<keyword id="KW-0010">Activator</keyword>
<keyword id="KW-0927">Auxin signaling pathway</keyword>
<keyword id="KW-0217">Developmental protein</keyword>
<keyword id="KW-0238">DNA-binding</keyword>
<keyword id="KW-0936">Ethylene signaling pathway</keyword>
<keyword id="KW-0539">Nucleus</keyword>
<keyword id="KW-1185">Reference proteome</keyword>
<keyword id="KW-0677">Repeat</keyword>
<keyword id="KW-0804">Transcription</keyword>
<keyword id="KW-0805">Transcription regulation</keyword>
<gene>
    <name evidence="10" type="primary">PLT2</name>
    <name evidence="11" type="synonym">AIL4</name>
    <name evidence="13" type="ordered locus">At1g51190</name>
    <name evidence="14" type="ORF">F11M15.6</name>
</gene>
<feature type="chain" id="PRO_0000297931" description="AP2-like ethylene-responsive transcription factor PLT2">
    <location>
        <begin position="1"/>
        <end position="568"/>
    </location>
</feature>
<feature type="DNA-binding region" description="AP2/ERF 1" evidence="2">
    <location>
        <begin position="190"/>
        <end position="256"/>
    </location>
</feature>
<feature type="DNA-binding region" description="AP2/ERF 2" evidence="2">
    <location>
        <begin position="292"/>
        <end position="350"/>
    </location>
</feature>
<feature type="region of interest" description="Disordered" evidence="3">
    <location>
        <begin position="151"/>
        <end position="173"/>
    </location>
</feature>
<feature type="region of interest" description="Disordered" evidence="3">
    <location>
        <begin position="548"/>
        <end position="568"/>
    </location>
</feature>
<feature type="compositionally biased region" description="Low complexity" evidence="3">
    <location>
        <begin position="151"/>
        <end position="171"/>
    </location>
</feature>
<feature type="sequence conflict" description="In Ref. 2; AAS97938." evidence="12" ref="2">
    <original>T</original>
    <variation>P</variation>
    <location>
        <position position="80"/>
    </location>
</feature>
<evidence type="ECO:0000250" key="1">
    <source>
        <dbReference type="UniProtKB" id="Q9LND1"/>
    </source>
</evidence>
<evidence type="ECO:0000255" key="2">
    <source>
        <dbReference type="PROSITE-ProRule" id="PRU00366"/>
    </source>
</evidence>
<evidence type="ECO:0000256" key="3">
    <source>
        <dbReference type="SAM" id="MobiDB-lite"/>
    </source>
</evidence>
<evidence type="ECO:0000269" key="4">
    <source>
    </source>
</evidence>
<evidence type="ECO:0000269" key="5">
    <source>
    </source>
</evidence>
<evidence type="ECO:0000269" key="6">
    <source>
    </source>
</evidence>
<evidence type="ECO:0000269" key="7">
    <source>
    </source>
</evidence>
<evidence type="ECO:0000269" key="8">
    <source>
    </source>
</evidence>
<evidence type="ECO:0000269" key="9">
    <source>
    </source>
</evidence>
<evidence type="ECO:0000303" key="10">
    <source>
    </source>
</evidence>
<evidence type="ECO:0000303" key="11">
    <source>
    </source>
</evidence>
<evidence type="ECO:0000305" key="12"/>
<evidence type="ECO:0000312" key="13">
    <source>
        <dbReference type="Araport" id="AT1G51190"/>
    </source>
</evidence>
<evidence type="ECO:0000312" key="14">
    <source>
        <dbReference type="EMBL" id="AAD30633.1"/>
    </source>
</evidence>
<dbReference type="EMBL" id="AY506550">
    <property type="protein sequence ID" value="AAS86336.1"/>
    <property type="molecule type" value="mRNA"/>
</dbReference>
<dbReference type="EMBL" id="AY585681">
    <property type="protein sequence ID" value="AAS97938.1"/>
    <property type="molecule type" value="mRNA"/>
</dbReference>
<dbReference type="EMBL" id="AC006085">
    <property type="protein sequence ID" value="AAD30633.1"/>
    <property type="status" value="ALT_SEQ"/>
    <property type="molecule type" value="Genomic_DNA"/>
</dbReference>
<dbReference type="EMBL" id="CP002684">
    <property type="protein sequence ID" value="AEE32632.1"/>
    <property type="molecule type" value="Genomic_DNA"/>
</dbReference>
<dbReference type="EMBL" id="BT020277">
    <property type="protein sequence ID" value="AAV84498.1"/>
    <property type="molecule type" value="mRNA"/>
</dbReference>
<dbReference type="EMBL" id="BT020460">
    <property type="protein sequence ID" value="AAW30038.1"/>
    <property type="molecule type" value="mRNA"/>
</dbReference>
<dbReference type="PIR" id="F96549">
    <property type="entry name" value="F96549"/>
</dbReference>
<dbReference type="RefSeq" id="NP_175530.2">
    <property type="nucleotide sequence ID" value="NM_103997.4"/>
</dbReference>
<dbReference type="SMR" id="Q5YGP7"/>
<dbReference type="BioGRID" id="26767">
    <property type="interactions" value="2"/>
</dbReference>
<dbReference type="FunCoup" id="Q5YGP7">
    <property type="interactions" value="1"/>
</dbReference>
<dbReference type="IntAct" id="Q5YGP7">
    <property type="interactions" value="4"/>
</dbReference>
<dbReference type="STRING" id="3702.Q5YGP7"/>
<dbReference type="PaxDb" id="3702-AT1G51190.1"/>
<dbReference type="ProteomicsDB" id="234671"/>
<dbReference type="EnsemblPlants" id="AT1G51190.1">
    <property type="protein sequence ID" value="AT1G51190.1"/>
    <property type="gene ID" value="AT1G51190"/>
</dbReference>
<dbReference type="GeneID" id="841542"/>
<dbReference type="Gramene" id="AT1G51190.1">
    <property type="protein sequence ID" value="AT1G51190.1"/>
    <property type="gene ID" value="AT1G51190"/>
</dbReference>
<dbReference type="KEGG" id="ath:AT1G51190"/>
<dbReference type="Araport" id="AT1G51190"/>
<dbReference type="TAIR" id="AT1G51190">
    <property type="gene designation" value="PLT2"/>
</dbReference>
<dbReference type="eggNOG" id="ENOG502QSTN">
    <property type="taxonomic scope" value="Eukaryota"/>
</dbReference>
<dbReference type="HOGENOM" id="CLU_013549_5_0_1"/>
<dbReference type="InParanoid" id="Q5YGP7"/>
<dbReference type="OMA" id="EMMALNS"/>
<dbReference type="PhylomeDB" id="Q5YGP7"/>
<dbReference type="PRO" id="PR:Q5YGP7"/>
<dbReference type="Proteomes" id="UP000006548">
    <property type="component" value="Chromosome 1"/>
</dbReference>
<dbReference type="ExpressionAtlas" id="Q5YGP7">
    <property type="expression patterns" value="baseline and differential"/>
</dbReference>
<dbReference type="GO" id="GO:0005634">
    <property type="term" value="C:nucleus"/>
    <property type="evidence" value="ECO:0000303"/>
    <property type="project" value="TAIR"/>
</dbReference>
<dbReference type="GO" id="GO:0003677">
    <property type="term" value="F:DNA binding"/>
    <property type="evidence" value="ECO:0007669"/>
    <property type="project" value="UniProtKB-KW"/>
</dbReference>
<dbReference type="GO" id="GO:0003700">
    <property type="term" value="F:DNA-binding transcription factor activity"/>
    <property type="evidence" value="ECO:0000250"/>
    <property type="project" value="TAIR"/>
</dbReference>
<dbReference type="GO" id="GO:0009734">
    <property type="term" value="P:auxin-activated signaling pathway"/>
    <property type="evidence" value="ECO:0007669"/>
    <property type="project" value="UniProtKB-KW"/>
</dbReference>
<dbReference type="GO" id="GO:0009873">
    <property type="term" value="P:ethylene-activated signaling pathway"/>
    <property type="evidence" value="ECO:0007669"/>
    <property type="project" value="UniProtKB-KW"/>
</dbReference>
<dbReference type="GO" id="GO:0010073">
    <property type="term" value="P:meristem maintenance"/>
    <property type="evidence" value="ECO:0000316"/>
    <property type="project" value="TAIR"/>
</dbReference>
<dbReference type="GO" id="GO:0007389">
    <property type="term" value="P:pattern specification process"/>
    <property type="evidence" value="ECO:0000315"/>
    <property type="project" value="TAIR"/>
</dbReference>
<dbReference type="GO" id="GO:0048364">
    <property type="term" value="P:root development"/>
    <property type="evidence" value="ECO:0000315"/>
    <property type="project" value="TAIR"/>
</dbReference>
<dbReference type="GO" id="GO:0010449">
    <property type="term" value="P:root meristem growth"/>
    <property type="evidence" value="ECO:0000316"/>
    <property type="project" value="TAIR"/>
</dbReference>
<dbReference type="GO" id="GO:0019827">
    <property type="term" value="P:stem cell population maintenance"/>
    <property type="evidence" value="ECO:0000315"/>
    <property type="project" value="TAIR"/>
</dbReference>
<dbReference type="GO" id="GO:0000723">
    <property type="term" value="P:telomere maintenance"/>
    <property type="evidence" value="ECO:0000314"/>
    <property type="project" value="TAIR"/>
</dbReference>
<dbReference type="CDD" id="cd00018">
    <property type="entry name" value="AP2"/>
    <property type="match status" value="2"/>
</dbReference>
<dbReference type="FunFam" id="3.30.730.10:FF:000002">
    <property type="entry name" value="AP2-like ethylene-responsive transcription factor"/>
    <property type="match status" value="1"/>
</dbReference>
<dbReference type="FunFam" id="3.30.730.10:FF:000003">
    <property type="entry name" value="AP2-like ethylene-responsive transcription factor ANT"/>
    <property type="match status" value="1"/>
</dbReference>
<dbReference type="Gene3D" id="3.30.730.10">
    <property type="entry name" value="AP2/ERF domain"/>
    <property type="match status" value="2"/>
</dbReference>
<dbReference type="InterPro" id="IPR001471">
    <property type="entry name" value="AP2/ERF_dom"/>
</dbReference>
<dbReference type="InterPro" id="IPR036955">
    <property type="entry name" value="AP2/ERF_dom_sf"/>
</dbReference>
<dbReference type="InterPro" id="IPR016177">
    <property type="entry name" value="DNA-bd_dom_sf"/>
</dbReference>
<dbReference type="PANTHER" id="PTHR32467">
    <property type="entry name" value="AP2-LIKE ETHYLENE-RESPONSIVE TRANSCRIPTION FACTOR"/>
    <property type="match status" value="1"/>
</dbReference>
<dbReference type="PANTHER" id="PTHR32467:SF22">
    <property type="entry name" value="AP2-LIKE ETHYLENE-RESPONSIVE TRANSCRIPTION FACTOR PLT2"/>
    <property type="match status" value="1"/>
</dbReference>
<dbReference type="Pfam" id="PF00847">
    <property type="entry name" value="AP2"/>
    <property type="match status" value="2"/>
</dbReference>
<dbReference type="PRINTS" id="PR00367">
    <property type="entry name" value="ETHRSPELEMNT"/>
</dbReference>
<dbReference type="SMART" id="SM00380">
    <property type="entry name" value="AP2"/>
    <property type="match status" value="2"/>
</dbReference>
<dbReference type="SUPFAM" id="SSF54171">
    <property type="entry name" value="DNA-binding domain"/>
    <property type="match status" value="2"/>
</dbReference>
<dbReference type="PROSITE" id="PS51032">
    <property type="entry name" value="AP2_ERF"/>
    <property type="match status" value="2"/>
</dbReference>
<reference key="1">
    <citation type="journal article" date="2004" name="Cell">
        <title>The PLETHORA genes mediate patterning of the Arabidopsis root stem cell niche.</title>
        <authorList>
            <person name="Aida M."/>
            <person name="Beis D."/>
            <person name="Heidstra R."/>
            <person name="Willemsen V."/>
            <person name="Blilou I."/>
            <person name="Galinha C."/>
            <person name="Nussaume L."/>
            <person name="Noh Y.-S."/>
            <person name="Amasino R."/>
            <person name="Scheres B."/>
        </authorList>
    </citation>
    <scope>NUCLEOTIDE SEQUENCE [MRNA]</scope>
    <scope>FUNCTION</scope>
    <scope>TISSUE SPECIFICITY</scope>
    <scope>DEVELOPMENTAL STAGE</scope>
    <scope>SUBCELLULAR LOCATION</scope>
    <scope>INDUCTION</scope>
    <source>
        <strain>cv. Columbia</strain>
    </source>
</reference>
<reference key="2">
    <citation type="submission" date="2004-03" db="EMBL/GenBank/DDBJ databases">
        <title>Molecular cloning, expression, phylogenetic and functional characterization of the Arabidopsis AP2/EREBP transcription factor family.</title>
        <authorList>
            <person name="Pan Y."/>
            <person name="Gong W."/>
            <person name="Liu D."/>
            <person name="Fu Q."/>
            <person name="Mei W.-Q."/>
            <person name="Song W.-Q."/>
            <person name="Ma L.-G."/>
            <person name="Luo J.-C."/>
            <person name="Deng X.-W."/>
            <person name="Zhu Y.-X."/>
        </authorList>
    </citation>
    <scope>NUCLEOTIDE SEQUENCE [MRNA]</scope>
</reference>
<reference key="3">
    <citation type="journal article" date="2000" name="Nature">
        <title>Sequence and analysis of chromosome 1 of the plant Arabidopsis thaliana.</title>
        <authorList>
            <person name="Theologis A."/>
            <person name="Ecker J.R."/>
            <person name="Palm C.J."/>
            <person name="Federspiel N.A."/>
            <person name="Kaul S."/>
            <person name="White O."/>
            <person name="Alonso J."/>
            <person name="Altafi H."/>
            <person name="Araujo R."/>
            <person name="Bowman C.L."/>
            <person name="Brooks S.Y."/>
            <person name="Buehler E."/>
            <person name="Chan A."/>
            <person name="Chao Q."/>
            <person name="Chen H."/>
            <person name="Cheuk R.F."/>
            <person name="Chin C.W."/>
            <person name="Chung M.K."/>
            <person name="Conn L."/>
            <person name="Conway A.B."/>
            <person name="Conway A.R."/>
            <person name="Creasy T.H."/>
            <person name="Dewar K."/>
            <person name="Dunn P."/>
            <person name="Etgu P."/>
            <person name="Feldblyum T.V."/>
            <person name="Feng J.-D."/>
            <person name="Fong B."/>
            <person name="Fujii C.Y."/>
            <person name="Gill J.E."/>
            <person name="Goldsmith A.D."/>
            <person name="Haas B."/>
            <person name="Hansen N.F."/>
            <person name="Hughes B."/>
            <person name="Huizar L."/>
            <person name="Hunter J.L."/>
            <person name="Jenkins J."/>
            <person name="Johnson-Hopson C."/>
            <person name="Khan S."/>
            <person name="Khaykin E."/>
            <person name="Kim C.J."/>
            <person name="Koo H.L."/>
            <person name="Kremenetskaia I."/>
            <person name="Kurtz D.B."/>
            <person name="Kwan A."/>
            <person name="Lam B."/>
            <person name="Langin-Hooper S."/>
            <person name="Lee A."/>
            <person name="Lee J.M."/>
            <person name="Lenz C.A."/>
            <person name="Li J.H."/>
            <person name="Li Y.-P."/>
            <person name="Lin X."/>
            <person name="Liu S.X."/>
            <person name="Liu Z.A."/>
            <person name="Luros J.S."/>
            <person name="Maiti R."/>
            <person name="Marziali A."/>
            <person name="Militscher J."/>
            <person name="Miranda M."/>
            <person name="Nguyen M."/>
            <person name="Nierman W.C."/>
            <person name="Osborne B.I."/>
            <person name="Pai G."/>
            <person name="Peterson J."/>
            <person name="Pham P.K."/>
            <person name="Rizzo M."/>
            <person name="Rooney T."/>
            <person name="Rowley D."/>
            <person name="Sakano H."/>
            <person name="Salzberg S.L."/>
            <person name="Schwartz J.R."/>
            <person name="Shinn P."/>
            <person name="Southwick A.M."/>
            <person name="Sun H."/>
            <person name="Tallon L.J."/>
            <person name="Tambunga G."/>
            <person name="Toriumi M.J."/>
            <person name="Town C.D."/>
            <person name="Utterback T."/>
            <person name="Van Aken S."/>
            <person name="Vaysberg M."/>
            <person name="Vysotskaia V.S."/>
            <person name="Walker M."/>
            <person name="Wu D."/>
            <person name="Yu G."/>
            <person name="Fraser C.M."/>
            <person name="Venter J.C."/>
            <person name="Davis R.W."/>
        </authorList>
    </citation>
    <scope>NUCLEOTIDE SEQUENCE [LARGE SCALE GENOMIC DNA]</scope>
    <source>
        <strain>cv. Columbia</strain>
    </source>
</reference>
<reference key="4">
    <citation type="journal article" date="2017" name="Plant J.">
        <title>Araport11: a complete reannotation of the Arabidopsis thaliana reference genome.</title>
        <authorList>
            <person name="Cheng C.Y."/>
            <person name="Krishnakumar V."/>
            <person name="Chan A.P."/>
            <person name="Thibaud-Nissen F."/>
            <person name="Schobel S."/>
            <person name="Town C.D."/>
        </authorList>
    </citation>
    <scope>GENOME REANNOTATION</scope>
    <source>
        <strain>cv. Columbia</strain>
    </source>
</reference>
<reference key="5">
    <citation type="submission" date="2004-12" db="EMBL/GenBank/DDBJ databases">
        <title>Arabidopsis ORF clones.</title>
        <authorList>
            <person name="Shinn P."/>
            <person name="Chen H."/>
            <person name="Cheuk R.F."/>
            <person name="Kim C.J."/>
            <person name="Ecker J.R."/>
        </authorList>
    </citation>
    <scope>NUCLEOTIDE SEQUENCE [LARGE SCALE MRNA]</scope>
    <source>
        <strain>cv. Columbia</strain>
    </source>
</reference>
<reference key="6">
    <citation type="journal article" date="2005" name="Nature">
        <title>The PIN auxin efflux facilitator network controls growth and patterning in Arabidopsis roots.</title>
        <authorList>
            <person name="Blilou I."/>
            <person name="Xu J."/>
            <person name="Wildwater M."/>
            <person name="Willemsen V."/>
            <person name="Paponov I."/>
            <person name="Friml J."/>
            <person name="Heidstra R."/>
            <person name="Aida M."/>
            <person name="Palme K."/>
            <person name="Scheres B."/>
        </authorList>
    </citation>
    <scope>FUNCTION</scope>
    <scope>TISSUE SPECIFICITY</scope>
</reference>
<reference key="7">
    <citation type="journal article" date="2005" name="Plant Mol. Biol.">
        <title>AINTEGUMENTA-like (AIL) genes are expressed in young tissues and may specify meristematic or division-competent states.</title>
        <authorList>
            <person name="Nole-Wilson S."/>
            <person name="Tranby T.L."/>
            <person name="Krizek B.A."/>
        </authorList>
    </citation>
    <scope>TISSUE SPECIFICITY</scope>
</reference>
<reference key="8">
    <citation type="journal article" date="2006" name="Plant Physiol.">
        <title>Genome-wide analysis of the ERF gene family in Arabidopsis and rice.</title>
        <authorList>
            <person name="Nakano T."/>
            <person name="Suzuki K."/>
            <person name="Fujimura T."/>
            <person name="Shinshi H."/>
        </authorList>
    </citation>
    <scope>GENE FAMILY</scope>
    <scope>NOMENCLATURE</scope>
</reference>
<reference key="9">
    <citation type="journal article" date="2006" name="Science">
        <title>A molecular framework for plant regeneration.</title>
        <authorList>
            <person name="Xu J."/>
            <person name="Hofhuis H."/>
            <person name="Heidstra R."/>
            <person name="Sauer M."/>
            <person name="Friml J."/>
            <person name="Scheres B."/>
        </authorList>
    </citation>
    <scope>FUNCTION</scope>
    <scope>TISSUE SPECIFICITY</scope>
</reference>
<reference key="10">
    <citation type="journal article" date="2010" name="Nature">
        <title>Control of Arabidopsis apical-basal embryo polarity by antagonistic transcription factors.</title>
        <authorList>
            <person name="Smith Z.R."/>
            <person name="Long J.A."/>
        </authorList>
    </citation>
    <scope>FUNCTION</scope>
    <scope>TISSUE SPECIFICITY</scope>
    <scope>DEVELOPMENTAL STAGE</scope>
</reference>
<reference key="11">
    <citation type="journal article" date="2010" name="Science">
        <title>Secreted peptide signals required for maintenance of root stem cell niche in Arabidopsis.</title>
        <authorList>
            <person name="Matsuzaki Y."/>
            <person name="Ogawa-Ohnishi M."/>
            <person name="Mori A."/>
            <person name="Matsubayashi Y."/>
        </authorList>
    </citation>
    <scope>REGULATION BY RGF</scope>
</reference>
<reference key="12">
    <citation type="journal article" date="2020" name="Nature">
        <title>RGF1 controls root meristem size through ROS signalling.</title>
        <authorList>
            <person name="Yamada M."/>
            <person name="Han X."/>
            <person name="Benfey P.N."/>
        </authorList>
    </citation>
    <scope>PTM</scope>
    <source>
        <strain>cv. Columbia</strain>
    </source>
</reference>
<organism>
    <name type="scientific">Arabidopsis thaliana</name>
    <name type="common">Mouse-ear cress</name>
    <dbReference type="NCBI Taxonomy" id="3702"/>
    <lineage>
        <taxon>Eukaryota</taxon>
        <taxon>Viridiplantae</taxon>
        <taxon>Streptophyta</taxon>
        <taxon>Embryophyta</taxon>
        <taxon>Tracheophyta</taxon>
        <taxon>Spermatophyta</taxon>
        <taxon>Magnoliopsida</taxon>
        <taxon>eudicotyledons</taxon>
        <taxon>Gunneridae</taxon>
        <taxon>Pentapetalae</taxon>
        <taxon>rosids</taxon>
        <taxon>malvids</taxon>
        <taxon>Brassicales</taxon>
        <taxon>Brassicaceae</taxon>
        <taxon>Camelineae</taxon>
        <taxon>Arabidopsis</taxon>
    </lineage>
</organism>